<organism>
    <name type="scientific">Bacillus cereus</name>
    <dbReference type="NCBI Taxonomy" id="1396"/>
    <lineage>
        <taxon>Bacteria</taxon>
        <taxon>Bacillati</taxon>
        <taxon>Bacillota</taxon>
        <taxon>Bacilli</taxon>
        <taxon>Bacillales</taxon>
        <taxon>Bacillaceae</taxon>
        <taxon>Bacillus</taxon>
        <taxon>Bacillus cereus group</taxon>
    </lineage>
</organism>
<feature type="chain" id="PRO_0000145291" description="DNA gyrase subunit B">
    <location>
        <begin position="1" status="less than"/>
        <end position="404" status="greater than"/>
    </location>
</feature>
<feature type="domain" description="Toprim" evidence="2">
    <location>
        <begin position="321"/>
        <end position="404" status="greater than"/>
    </location>
</feature>
<feature type="binding site" evidence="2">
    <location>
        <position position="327"/>
    </location>
    <ligand>
        <name>Mg(2+)</name>
        <dbReference type="ChEBI" id="CHEBI:18420"/>
        <label>1</label>
        <note>catalytic</note>
    </ligand>
</feature>
<feature type="binding site" evidence="2">
    <location>
        <position position="400"/>
    </location>
    <ligand>
        <name>Mg(2+)</name>
        <dbReference type="ChEBI" id="CHEBI:18420"/>
        <label>1</label>
        <note>catalytic</note>
    </ligand>
</feature>
<feature type="binding site" evidence="2">
    <location>
        <position position="400"/>
    </location>
    <ligand>
        <name>Mg(2+)</name>
        <dbReference type="ChEBI" id="CHEBI:18420"/>
        <label>2</label>
    </ligand>
</feature>
<feature type="binding site" evidence="2">
    <location>
        <position position="402"/>
    </location>
    <ligand>
        <name>Mg(2+)</name>
        <dbReference type="ChEBI" id="CHEBI:18420"/>
        <label>2</label>
    </ligand>
</feature>
<feature type="site" description="Interaction with DNA" evidence="2">
    <location>
        <position position="352"/>
    </location>
</feature>
<feature type="site" description="Interaction with DNA" evidence="2">
    <location>
        <position position="355"/>
    </location>
</feature>
<feature type="non-terminal residue">
    <location>
        <position position="1"/>
    </location>
</feature>
<feature type="non-terminal residue">
    <location>
        <position position="404"/>
    </location>
</feature>
<protein>
    <recommendedName>
        <fullName>DNA gyrase subunit B</fullName>
        <ecNumber evidence="2">5.6.2.2</ecNumber>
    </recommendedName>
</protein>
<proteinExistence type="inferred from homology"/>
<reference key="1">
    <citation type="journal article" date="1999" name="Appl. Environ. Microbiol.">
        <title>Cloning and nucleotide sequence analysis of gyrB of Bacillus cereus, B. thuringiensis, B. mycoides, and B. anthracis and their application to the detection of B. cereus in rice.</title>
        <authorList>
            <person name="Yamada S."/>
            <person name="Ohashi E."/>
            <person name="Agata N."/>
            <person name="Venkateswaran K."/>
        </authorList>
    </citation>
    <scope>NUCLEOTIDE SEQUENCE [GENOMIC DNA]</scope>
    <source>
        <strain>ATCC 14579 / DSM 31 / JCM 2152 / NCIMB 9373 / NCTC 2599 / NRRL B-3711</strain>
    </source>
</reference>
<evidence type="ECO:0000250" key="1">
    <source>
        <dbReference type="UniProtKB" id="P0AES6"/>
    </source>
</evidence>
<evidence type="ECO:0000255" key="2">
    <source>
        <dbReference type="PROSITE-ProRule" id="PRU00995"/>
    </source>
</evidence>
<evidence type="ECO:0000305" key="3"/>
<name>GYRB_BACCE</name>
<accession>Q9X3Y3</accession>
<sequence length="404" mass="44918">HAGGKFDGGGYKVSGGLHGVGASVVNALSTELEVFVHREGKIHYQKYERGIPVADLKVIGDTDQTGTITRFKPDPEIFQETTVYDFDTLATRMRELAFLNRNIKLTIEDKRERKQKKEFHYEGGIKSYVEHLNRSKQPIHEEPVYVEGSKDGIQVEVSLQYNEGYTNNIYSFTNNIHTYEGGTHEVGFKTALTRVINDYGRKNSILKDADSNLTGEDVREGLTAIVSIKHPNPQFEGQTKTKLGNSEARTITESVFSEAFEKFLLENPNVARKIVEKGTMAARARVAAKKARELTRRKSALEVSSLPGKLADCSSKDPAISEIYIVEGDSAGGSAKQGRDRHFQAILPLKGKIINVEKARLDKILSNDEVRTIITAIGTNIGGDFDIEKARYHKVIIMTDADVD</sequence>
<gene>
    <name type="primary">gyrB</name>
</gene>
<dbReference type="EC" id="5.6.2.2" evidence="2"/>
<dbReference type="EMBL" id="AF090330">
    <property type="protein sequence ID" value="AAD25955.1"/>
    <property type="molecule type" value="Genomic_DNA"/>
</dbReference>
<dbReference type="SMR" id="Q9X3Y3"/>
<dbReference type="eggNOG" id="COG0187">
    <property type="taxonomic scope" value="Bacteria"/>
</dbReference>
<dbReference type="GO" id="GO:0005737">
    <property type="term" value="C:cytoplasm"/>
    <property type="evidence" value="ECO:0007669"/>
    <property type="project" value="UniProtKB-SubCell"/>
</dbReference>
<dbReference type="GO" id="GO:0005524">
    <property type="term" value="F:ATP binding"/>
    <property type="evidence" value="ECO:0007669"/>
    <property type="project" value="UniProtKB-KW"/>
</dbReference>
<dbReference type="GO" id="GO:0003677">
    <property type="term" value="F:DNA binding"/>
    <property type="evidence" value="ECO:0007669"/>
    <property type="project" value="UniProtKB-KW"/>
</dbReference>
<dbReference type="GO" id="GO:0034335">
    <property type="term" value="F:DNA negative supercoiling activity"/>
    <property type="evidence" value="ECO:0007669"/>
    <property type="project" value="UniProtKB-ARBA"/>
</dbReference>
<dbReference type="GO" id="GO:0046872">
    <property type="term" value="F:metal ion binding"/>
    <property type="evidence" value="ECO:0007669"/>
    <property type="project" value="UniProtKB-KW"/>
</dbReference>
<dbReference type="GO" id="GO:0006265">
    <property type="term" value="P:DNA topological change"/>
    <property type="evidence" value="ECO:0007669"/>
    <property type="project" value="InterPro"/>
</dbReference>
<dbReference type="CDD" id="cd00822">
    <property type="entry name" value="TopoII_Trans_DNA_gyrase"/>
    <property type="match status" value="1"/>
</dbReference>
<dbReference type="FunFam" id="3.30.230.10:FF:000005">
    <property type="entry name" value="DNA gyrase subunit B"/>
    <property type="match status" value="1"/>
</dbReference>
<dbReference type="Gene3D" id="3.30.230.10">
    <property type="match status" value="1"/>
</dbReference>
<dbReference type="Gene3D" id="3.40.50.670">
    <property type="match status" value="1"/>
</dbReference>
<dbReference type="Gene3D" id="3.30.565.10">
    <property type="entry name" value="Histidine kinase-like ATPase, C-terminal domain"/>
    <property type="match status" value="1"/>
</dbReference>
<dbReference type="InterPro" id="IPR036890">
    <property type="entry name" value="HATPase_C_sf"/>
</dbReference>
<dbReference type="InterPro" id="IPR020568">
    <property type="entry name" value="Ribosomal_Su5_D2-typ_SF"/>
</dbReference>
<dbReference type="InterPro" id="IPR014721">
    <property type="entry name" value="Ribsml_uS5_D2-typ_fold_subgr"/>
</dbReference>
<dbReference type="InterPro" id="IPR001241">
    <property type="entry name" value="Topo_IIA"/>
</dbReference>
<dbReference type="InterPro" id="IPR013760">
    <property type="entry name" value="Topo_IIA-like_dom_sf"/>
</dbReference>
<dbReference type="InterPro" id="IPR000565">
    <property type="entry name" value="Topo_IIA_B"/>
</dbReference>
<dbReference type="InterPro" id="IPR013759">
    <property type="entry name" value="Topo_IIA_B_C"/>
</dbReference>
<dbReference type="InterPro" id="IPR013506">
    <property type="entry name" value="Topo_IIA_bsu_dom2"/>
</dbReference>
<dbReference type="InterPro" id="IPR018522">
    <property type="entry name" value="TopoIIA_CS"/>
</dbReference>
<dbReference type="InterPro" id="IPR006171">
    <property type="entry name" value="TOPRIM_dom"/>
</dbReference>
<dbReference type="PANTHER" id="PTHR45866:SF1">
    <property type="entry name" value="DNA GYRASE SUBUNIT B, MITOCHONDRIAL"/>
    <property type="match status" value="1"/>
</dbReference>
<dbReference type="PANTHER" id="PTHR45866">
    <property type="entry name" value="DNA GYRASE/TOPOISOMERASE SUBUNIT B"/>
    <property type="match status" value="1"/>
</dbReference>
<dbReference type="Pfam" id="PF00204">
    <property type="entry name" value="DNA_gyraseB"/>
    <property type="match status" value="1"/>
</dbReference>
<dbReference type="Pfam" id="PF01751">
    <property type="entry name" value="Toprim"/>
    <property type="match status" value="1"/>
</dbReference>
<dbReference type="PRINTS" id="PR01159">
    <property type="entry name" value="DNAGYRASEB"/>
</dbReference>
<dbReference type="PRINTS" id="PR00418">
    <property type="entry name" value="TPI2FAMILY"/>
</dbReference>
<dbReference type="SMART" id="SM00433">
    <property type="entry name" value="TOP2c"/>
    <property type="match status" value="1"/>
</dbReference>
<dbReference type="SUPFAM" id="SSF55874">
    <property type="entry name" value="ATPase domain of HSP90 chaperone/DNA topoisomerase II/histidine kinase"/>
    <property type="match status" value="1"/>
</dbReference>
<dbReference type="SUPFAM" id="SSF54211">
    <property type="entry name" value="Ribosomal protein S5 domain 2-like"/>
    <property type="match status" value="1"/>
</dbReference>
<dbReference type="SUPFAM" id="SSF56719">
    <property type="entry name" value="Type II DNA topoisomerase"/>
    <property type="match status" value="1"/>
</dbReference>
<dbReference type="PROSITE" id="PS00177">
    <property type="entry name" value="TOPOISOMERASE_II"/>
    <property type="match status" value="1"/>
</dbReference>
<dbReference type="PROSITE" id="PS50880">
    <property type="entry name" value="TOPRIM"/>
    <property type="match status" value="1"/>
</dbReference>
<keyword id="KW-0067">ATP-binding</keyword>
<keyword id="KW-0963">Cytoplasm</keyword>
<keyword id="KW-0238">DNA-binding</keyword>
<keyword id="KW-0413">Isomerase</keyword>
<keyword id="KW-0460">Magnesium</keyword>
<keyword id="KW-0479">Metal-binding</keyword>
<keyword id="KW-0547">Nucleotide-binding</keyword>
<keyword id="KW-0799">Topoisomerase</keyword>
<comment type="function">
    <text evidence="1">A type II topoisomerase that negatively supercoils closed circular double-stranded (ds) DNA in an ATP-dependent manner to modulate DNA topology and maintain chromosomes in an underwound state. Negative supercoiling favors strand separation, and DNA replication, transcription, recombination and repair, all of which involve strand separation. Also able to catalyze the interconversion of other topological isomers of dsDNA rings, including catenanes and knotted rings. Type II topoisomerases break and join 2 DNA strands simultaneously in an ATP-dependent manner.</text>
</comment>
<comment type="catalytic activity">
    <reaction evidence="2">
        <text>ATP-dependent breakage, passage and rejoining of double-stranded DNA.</text>
        <dbReference type="EC" id="5.6.2.2"/>
    </reaction>
</comment>
<comment type="cofactor">
    <cofactor evidence="2">
        <name>Mg(2+)</name>
        <dbReference type="ChEBI" id="CHEBI:18420"/>
    </cofactor>
    <cofactor evidence="2">
        <name>Mn(2+)</name>
        <dbReference type="ChEBI" id="CHEBI:29035"/>
    </cofactor>
    <cofactor evidence="2">
        <name>Ca(2+)</name>
        <dbReference type="ChEBI" id="CHEBI:29108"/>
    </cofactor>
    <text evidence="2">Binds two Mg(2+) per subunit. The magnesium ions form salt bridges with both the protein and the DNA. Can also accept other divalent metal cations, such as Mn(2+) or Ca(2+).</text>
</comment>
<comment type="subunit">
    <text evidence="1">Heterotetramer, composed of two GyrA and two GyrB chains. In the heterotetramer, GyrA contains the active site tyrosine that forms a transient covalent intermediate with DNA, while GyrB binds cofactors and catalyzes ATP hydrolysis.</text>
</comment>
<comment type="subcellular location">
    <subcellularLocation>
        <location evidence="1">Cytoplasm</location>
    </subcellularLocation>
</comment>
<comment type="miscellaneous">
    <text evidence="1">Few gyrases are as efficient as E.coli at forming negative supercoils. Not all organisms have 2 type II topoisomerases; in organisms with a single type II topoisomerase this enzyme also has to decatenate newly replicated chromosomes.</text>
</comment>
<comment type="similarity">
    <text evidence="3">Belongs to the type II topoisomerase GyrB family.</text>
</comment>